<reference key="1">
    <citation type="submission" date="2006-03" db="EMBL/GenBank/DDBJ databases">
        <title>Complete genome sequence of Francisella tularensis LVS (Live Vaccine Strain).</title>
        <authorList>
            <person name="Chain P."/>
            <person name="Larimer F."/>
            <person name="Land M."/>
            <person name="Stilwagen S."/>
            <person name="Larsson P."/>
            <person name="Bearden S."/>
            <person name="Chu M."/>
            <person name="Oyston P."/>
            <person name="Forsman M."/>
            <person name="Andersson S."/>
            <person name="Lindler L."/>
            <person name="Titball R."/>
            <person name="Garcia E."/>
        </authorList>
    </citation>
    <scope>NUCLEOTIDE SEQUENCE [LARGE SCALE GENOMIC DNA]</scope>
    <source>
        <strain>LVS</strain>
    </source>
</reference>
<keyword id="KW-0963">Cytoplasm</keyword>
<keyword id="KW-0255">Endonuclease</keyword>
<keyword id="KW-0378">Hydrolase</keyword>
<keyword id="KW-0479">Metal-binding</keyword>
<keyword id="KW-0540">Nuclease</keyword>
<keyword id="KW-1185">Reference proteome</keyword>
<keyword id="KW-0690">Ribosome biogenesis</keyword>
<keyword id="KW-0698">rRNA processing</keyword>
<keyword id="KW-0862">Zinc</keyword>
<dbReference type="EC" id="3.1.-.-" evidence="1"/>
<dbReference type="EMBL" id="AM233362">
    <property type="protein sequence ID" value="CAJ79323.1"/>
    <property type="status" value="ALT_INIT"/>
    <property type="molecule type" value="Genomic_DNA"/>
</dbReference>
<dbReference type="SMR" id="Q2A3U8"/>
<dbReference type="KEGG" id="ftl:FTL_0884"/>
<dbReference type="Proteomes" id="UP000001944">
    <property type="component" value="Chromosome"/>
</dbReference>
<dbReference type="GO" id="GO:0005737">
    <property type="term" value="C:cytoplasm"/>
    <property type="evidence" value="ECO:0007669"/>
    <property type="project" value="UniProtKB-SubCell"/>
</dbReference>
<dbReference type="GO" id="GO:0004222">
    <property type="term" value="F:metalloendopeptidase activity"/>
    <property type="evidence" value="ECO:0007669"/>
    <property type="project" value="InterPro"/>
</dbReference>
<dbReference type="GO" id="GO:0004521">
    <property type="term" value="F:RNA endonuclease activity"/>
    <property type="evidence" value="ECO:0007669"/>
    <property type="project" value="UniProtKB-UniRule"/>
</dbReference>
<dbReference type="GO" id="GO:0008270">
    <property type="term" value="F:zinc ion binding"/>
    <property type="evidence" value="ECO:0007669"/>
    <property type="project" value="UniProtKB-UniRule"/>
</dbReference>
<dbReference type="GO" id="GO:0006364">
    <property type="term" value="P:rRNA processing"/>
    <property type="evidence" value="ECO:0007669"/>
    <property type="project" value="UniProtKB-UniRule"/>
</dbReference>
<dbReference type="Gene3D" id="3.40.390.30">
    <property type="entry name" value="Metalloproteases ('zincins'), catalytic domain"/>
    <property type="match status" value="1"/>
</dbReference>
<dbReference type="HAMAP" id="MF_00009">
    <property type="entry name" value="Endoribonucl_YbeY"/>
    <property type="match status" value="1"/>
</dbReference>
<dbReference type="InterPro" id="IPR023091">
    <property type="entry name" value="MetalPrtase_cat_dom_sf_prd"/>
</dbReference>
<dbReference type="InterPro" id="IPR002036">
    <property type="entry name" value="YbeY"/>
</dbReference>
<dbReference type="InterPro" id="IPR020549">
    <property type="entry name" value="YbeY_CS"/>
</dbReference>
<dbReference type="NCBIfam" id="TIGR00043">
    <property type="entry name" value="rRNA maturation RNase YbeY"/>
    <property type="match status" value="1"/>
</dbReference>
<dbReference type="PANTHER" id="PTHR46986">
    <property type="entry name" value="ENDORIBONUCLEASE YBEY, CHLOROPLASTIC"/>
    <property type="match status" value="1"/>
</dbReference>
<dbReference type="PANTHER" id="PTHR46986:SF1">
    <property type="entry name" value="ENDORIBONUCLEASE YBEY, CHLOROPLASTIC"/>
    <property type="match status" value="1"/>
</dbReference>
<dbReference type="Pfam" id="PF02130">
    <property type="entry name" value="YbeY"/>
    <property type="match status" value="1"/>
</dbReference>
<dbReference type="SUPFAM" id="SSF55486">
    <property type="entry name" value="Metalloproteases ('zincins'), catalytic domain"/>
    <property type="match status" value="1"/>
</dbReference>
<dbReference type="PROSITE" id="PS01306">
    <property type="entry name" value="UPF0054"/>
    <property type="match status" value="1"/>
</dbReference>
<evidence type="ECO:0000255" key="1">
    <source>
        <dbReference type="HAMAP-Rule" id="MF_00009"/>
    </source>
</evidence>
<evidence type="ECO:0000305" key="2"/>
<protein>
    <recommendedName>
        <fullName evidence="1">Endoribonuclease YbeY</fullName>
        <ecNumber evidence="1">3.1.-.-</ecNumber>
    </recommendedName>
</protein>
<feature type="chain" id="PRO_0000284207" description="Endoribonuclease YbeY">
    <location>
        <begin position="1"/>
        <end position="168"/>
    </location>
</feature>
<feature type="binding site" evidence="1">
    <location>
        <position position="123"/>
    </location>
    <ligand>
        <name>Zn(2+)</name>
        <dbReference type="ChEBI" id="CHEBI:29105"/>
        <note>catalytic</note>
    </ligand>
</feature>
<feature type="binding site" evidence="1">
    <location>
        <position position="127"/>
    </location>
    <ligand>
        <name>Zn(2+)</name>
        <dbReference type="ChEBI" id="CHEBI:29105"/>
        <note>catalytic</note>
    </ligand>
</feature>
<feature type="binding site" evidence="1">
    <location>
        <position position="133"/>
    </location>
    <ligand>
        <name>Zn(2+)</name>
        <dbReference type="ChEBI" id="CHEBI:29105"/>
        <note>catalytic</note>
    </ligand>
</feature>
<accession>Q2A3U8</accession>
<sequence length="168" mass="19427">MKRKLKMDNLNINFINDDEHPIPSQDLLLKCLQLVADKHHISHAEVNLNIVSNDEIQQINKQFRNKDKPTNIISFEFEKPQGLPDDIANDFLGDIVIAPAVLENEAKEQNKEINDHWQHIFIHGLLHLLGYDHQDDQEAEVMENLEIQLLAQLGIANPYIEQENQNGR</sequence>
<gene>
    <name evidence="1" type="primary">ybeY</name>
    <name type="ordered locus">FTL_0884</name>
</gene>
<proteinExistence type="inferred from homology"/>
<name>YBEY_FRATH</name>
<organism>
    <name type="scientific">Francisella tularensis subsp. holarctica (strain LVS)</name>
    <dbReference type="NCBI Taxonomy" id="376619"/>
    <lineage>
        <taxon>Bacteria</taxon>
        <taxon>Pseudomonadati</taxon>
        <taxon>Pseudomonadota</taxon>
        <taxon>Gammaproteobacteria</taxon>
        <taxon>Thiotrichales</taxon>
        <taxon>Francisellaceae</taxon>
        <taxon>Francisella</taxon>
    </lineage>
</organism>
<comment type="function">
    <text evidence="1">Single strand-specific metallo-endoribonuclease involved in late-stage 70S ribosome quality control and in maturation of the 3' terminus of the 16S rRNA.</text>
</comment>
<comment type="cofactor">
    <cofactor evidence="1">
        <name>Zn(2+)</name>
        <dbReference type="ChEBI" id="CHEBI:29105"/>
    </cofactor>
    <text evidence="1">Binds 1 zinc ion.</text>
</comment>
<comment type="subcellular location">
    <subcellularLocation>
        <location evidence="1">Cytoplasm</location>
    </subcellularLocation>
</comment>
<comment type="similarity">
    <text evidence="1">Belongs to the endoribonuclease YbeY family.</text>
</comment>
<comment type="sequence caution" evidence="2">
    <conflict type="erroneous initiation">
        <sequence resource="EMBL-CDS" id="CAJ79323"/>
    </conflict>
</comment>